<proteinExistence type="inferred from homology"/>
<comment type="function">
    <text evidence="1">Cytoskeletal protein that is involved in cell-shape control through regulation of the length of the long axis.</text>
</comment>
<comment type="subcellular location">
    <subcellularLocation>
        <location evidence="1">Cell inner membrane</location>
        <topology evidence="1">Single-pass type II membrane protein</topology>
    </subcellularLocation>
    <text evidence="1">Forms helical filaments along the long axis of the cell.</text>
</comment>
<comment type="domain">
    <text evidence="1">The helix-turn-helix (HTH) motif in the cytoplasmic domain of the N-terminus is involved in the formation of spirals to maintain the rigid rod shape. As this protein is anchored in the cytoplasmic membrane, the HTH motif may contribute to protein-protein interactions to form the RodZ helix, which is localized beneath the cytoplasmic membrane. The C-terminal domain may be critical for determination of the rod shape by probably interacting with enzymes required for synthesis of the peptidoglycan layer, including PBPs in the periplasm.</text>
</comment>
<comment type="similarity">
    <text evidence="1">Belongs to the RodZ family.</text>
</comment>
<gene>
    <name evidence="1" type="primary">rodZ</name>
    <name type="ordered locus">SPC_1130</name>
</gene>
<reference key="1">
    <citation type="journal article" date="2009" name="PLoS ONE">
        <title>Salmonella paratyphi C: genetic divergence from Salmonella choleraesuis and pathogenic convergence with Salmonella typhi.</title>
        <authorList>
            <person name="Liu W.-Q."/>
            <person name="Feng Y."/>
            <person name="Wang Y."/>
            <person name="Zou Q.-H."/>
            <person name="Chen F."/>
            <person name="Guo J.-T."/>
            <person name="Peng Y.-H."/>
            <person name="Jin Y."/>
            <person name="Li Y.-G."/>
            <person name="Hu S.-N."/>
            <person name="Johnston R.N."/>
            <person name="Liu G.-R."/>
            <person name="Liu S.-L."/>
        </authorList>
    </citation>
    <scope>NUCLEOTIDE SEQUENCE [LARGE SCALE GENOMIC DNA]</scope>
    <source>
        <strain>RKS4594</strain>
    </source>
</reference>
<accession>C0PYM9</accession>
<name>RODZ_SALPC</name>
<organism>
    <name type="scientific">Salmonella paratyphi C (strain RKS4594)</name>
    <dbReference type="NCBI Taxonomy" id="476213"/>
    <lineage>
        <taxon>Bacteria</taxon>
        <taxon>Pseudomonadati</taxon>
        <taxon>Pseudomonadota</taxon>
        <taxon>Gammaproteobacteria</taxon>
        <taxon>Enterobacterales</taxon>
        <taxon>Enterobacteriaceae</taxon>
        <taxon>Salmonella</taxon>
    </lineage>
</organism>
<keyword id="KW-0997">Cell inner membrane</keyword>
<keyword id="KW-1003">Cell membrane</keyword>
<keyword id="KW-0133">Cell shape</keyword>
<keyword id="KW-0238">DNA-binding</keyword>
<keyword id="KW-0472">Membrane</keyword>
<keyword id="KW-0735">Signal-anchor</keyword>
<keyword id="KW-0812">Transmembrane</keyword>
<keyword id="KW-1133">Transmembrane helix</keyword>
<evidence type="ECO:0000255" key="1">
    <source>
        <dbReference type="HAMAP-Rule" id="MF_02017"/>
    </source>
</evidence>
<evidence type="ECO:0000256" key="2">
    <source>
        <dbReference type="SAM" id="MobiDB-lite"/>
    </source>
</evidence>
<protein>
    <recommendedName>
        <fullName evidence="1">Cytoskeleton protein RodZ</fullName>
    </recommendedName>
</protein>
<dbReference type="EMBL" id="CP000857">
    <property type="protein sequence ID" value="ACN45296.1"/>
    <property type="molecule type" value="Genomic_DNA"/>
</dbReference>
<dbReference type="RefSeq" id="WP_001090898.1">
    <property type="nucleotide sequence ID" value="NC_012125.1"/>
</dbReference>
<dbReference type="SMR" id="C0PYM9"/>
<dbReference type="KEGG" id="sei:SPC_1130"/>
<dbReference type="HOGENOM" id="CLU_047530_3_1_6"/>
<dbReference type="Proteomes" id="UP000001599">
    <property type="component" value="Chromosome"/>
</dbReference>
<dbReference type="GO" id="GO:0005886">
    <property type="term" value="C:plasma membrane"/>
    <property type="evidence" value="ECO:0007669"/>
    <property type="project" value="UniProtKB-SubCell"/>
</dbReference>
<dbReference type="GO" id="GO:0003677">
    <property type="term" value="F:DNA binding"/>
    <property type="evidence" value="ECO:0007669"/>
    <property type="project" value="UniProtKB-KW"/>
</dbReference>
<dbReference type="GO" id="GO:0008360">
    <property type="term" value="P:regulation of cell shape"/>
    <property type="evidence" value="ECO:0007669"/>
    <property type="project" value="UniProtKB-UniRule"/>
</dbReference>
<dbReference type="CDD" id="cd00093">
    <property type="entry name" value="HTH_XRE"/>
    <property type="match status" value="1"/>
</dbReference>
<dbReference type="FunFam" id="1.10.260.40:FF:000014">
    <property type="entry name" value="Cytoskeleton protein RodZ"/>
    <property type="match status" value="1"/>
</dbReference>
<dbReference type="Gene3D" id="1.10.260.40">
    <property type="entry name" value="lambda repressor-like DNA-binding domains"/>
    <property type="match status" value="1"/>
</dbReference>
<dbReference type="HAMAP" id="MF_02017">
    <property type="entry name" value="RodZ"/>
    <property type="match status" value="1"/>
</dbReference>
<dbReference type="InterPro" id="IPR050400">
    <property type="entry name" value="Bact_Cytoskel_RodZ"/>
</dbReference>
<dbReference type="InterPro" id="IPR001387">
    <property type="entry name" value="Cro/C1-type_HTH"/>
</dbReference>
<dbReference type="InterPro" id="IPR010982">
    <property type="entry name" value="Lambda_DNA-bd_dom_sf"/>
</dbReference>
<dbReference type="InterPro" id="IPR023690">
    <property type="entry name" value="RodZ"/>
</dbReference>
<dbReference type="InterPro" id="IPR025194">
    <property type="entry name" value="RodZ-like_C"/>
</dbReference>
<dbReference type="NCBIfam" id="NF008109">
    <property type="entry name" value="PRK10856.1"/>
    <property type="match status" value="1"/>
</dbReference>
<dbReference type="PANTHER" id="PTHR34475">
    <property type="match status" value="1"/>
</dbReference>
<dbReference type="PANTHER" id="PTHR34475:SF1">
    <property type="entry name" value="CYTOSKELETON PROTEIN RODZ"/>
    <property type="match status" value="1"/>
</dbReference>
<dbReference type="Pfam" id="PF13413">
    <property type="entry name" value="HTH_25"/>
    <property type="match status" value="1"/>
</dbReference>
<dbReference type="Pfam" id="PF13464">
    <property type="entry name" value="RodZ_C"/>
    <property type="match status" value="1"/>
</dbReference>
<dbReference type="SMART" id="SM00530">
    <property type="entry name" value="HTH_XRE"/>
    <property type="match status" value="1"/>
</dbReference>
<dbReference type="SUPFAM" id="SSF47413">
    <property type="entry name" value="lambda repressor-like DNA-binding domains"/>
    <property type="match status" value="1"/>
</dbReference>
<dbReference type="PROSITE" id="PS50943">
    <property type="entry name" value="HTH_CROC1"/>
    <property type="match status" value="1"/>
</dbReference>
<sequence>MNTEATHDQNEAQTTGVRLRNAREQLGLSQQAVAERLCLKVSTVRDIEEDKAPSDLASTFLRGYIRSYARLVHVPEEELLPGLEKQAPLRAAKVAPMQSFSLGKRRKKRDGWLMSFTWLVLFVVVGLTGAWWWQNHKAQQEEITTMADQSTAELNADKDSGQSVPLDTRDATSQDTTPAQTAPAPATPVDSTAATQTPAPTAAATQNTVVAPSQANVDTAATSAAPAATETPSALPTSQAGVAAPAADPNALVMNFTADCWLEVTDATGKKLFSGMQRKDGNLNLTGQAPYKLKIGAPAAVQIQYQGKPVDLSRFIRTNQVARLTLNAEPTPAQ</sequence>
<feature type="chain" id="PRO_1000189545" description="Cytoskeleton protein RodZ">
    <location>
        <begin position="1"/>
        <end position="334"/>
    </location>
</feature>
<feature type="topological domain" description="Cytoplasmic" evidence="1">
    <location>
        <begin position="1"/>
        <end position="111"/>
    </location>
</feature>
<feature type="transmembrane region" description="Helical; Signal-anchor for type II membrane protein" evidence="1">
    <location>
        <begin position="112"/>
        <end position="132"/>
    </location>
</feature>
<feature type="topological domain" description="Periplasmic" evidence="1">
    <location>
        <begin position="133"/>
        <end position="334"/>
    </location>
</feature>
<feature type="domain" description="HTH cro/C1-type" evidence="1">
    <location>
        <begin position="19"/>
        <end position="71"/>
    </location>
</feature>
<feature type="DNA-binding region" description="H-T-H motif" evidence="1">
    <location>
        <begin position="30"/>
        <end position="49"/>
    </location>
</feature>
<feature type="region of interest" description="Disordered" evidence="2">
    <location>
        <begin position="154"/>
        <end position="241"/>
    </location>
</feature>
<feature type="compositionally biased region" description="Low complexity" evidence="2">
    <location>
        <begin position="176"/>
        <end position="211"/>
    </location>
</feature>
<feature type="compositionally biased region" description="Low complexity" evidence="2">
    <location>
        <begin position="219"/>
        <end position="241"/>
    </location>
</feature>